<keyword id="KW-0963">Cytoplasm</keyword>
<keyword id="KW-0227">DNA damage</keyword>
<keyword id="KW-0234">DNA repair</keyword>
<keyword id="KW-0378">Hydrolase</keyword>
<keyword id="KW-1185">Reference proteome</keyword>
<dbReference type="EC" id="3.2.2.27" evidence="1"/>
<dbReference type="EMBL" id="AE016853">
    <property type="protein sequence ID" value="AAO57692.1"/>
    <property type="molecule type" value="Genomic_DNA"/>
</dbReference>
<dbReference type="RefSeq" id="NP_793997.1">
    <property type="nucleotide sequence ID" value="NC_004578.1"/>
</dbReference>
<dbReference type="RefSeq" id="WP_003378513.1">
    <property type="nucleotide sequence ID" value="NC_004578.1"/>
</dbReference>
<dbReference type="SMR" id="Q87XE2"/>
<dbReference type="STRING" id="223283.PSPTO_4236"/>
<dbReference type="GeneID" id="1185916"/>
<dbReference type="KEGG" id="pst:PSPTO_4236"/>
<dbReference type="PATRIC" id="fig|223283.9.peg.4343"/>
<dbReference type="eggNOG" id="COG0692">
    <property type="taxonomic scope" value="Bacteria"/>
</dbReference>
<dbReference type="HOGENOM" id="CLU_032162_3_1_6"/>
<dbReference type="OrthoDB" id="9804372at2"/>
<dbReference type="PhylomeDB" id="Q87XE2"/>
<dbReference type="Proteomes" id="UP000002515">
    <property type="component" value="Chromosome"/>
</dbReference>
<dbReference type="GO" id="GO:0005737">
    <property type="term" value="C:cytoplasm"/>
    <property type="evidence" value="ECO:0007669"/>
    <property type="project" value="UniProtKB-SubCell"/>
</dbReference>
<dbReference type="GO" id="GO:0004844">
    <property type="term" value="F:uracil DNA N-glycosylase activity"/>
    <property type="evidence" value="ECO:0007669"/>
    <property type="project" value="UniProtKB-UniRule"/>
</dbReference>
<dbReference type="GO" id="GO:0097510">
    <property type="term" value="P:base-excision repair, AP site formation via deaminated base removal"/>
    <property type="evidence" value="ECO:0007669"/>
    <property type="project" value="TreeGrafter"/>
</dbReference>
<dbReference type="CDD" id="cd10027">
    <property type="entry name" value="UDG-F1-like"/>
    <property type="match status" value="1"/>
</dbReference>
<dbReference type="FunFam" id="3.40.470.10:FF:000001">
    <property type="entry name" value="Uracil-DNA glycosylase"/>
    <property type="match status" value="1"/>
</dbReference>
<dbReference type="Gene3D" id="3.40.470.10">
    <property type="entry name" value="Uracil-DNA glycosylase-like domain"/>
    <property type="match status" value="1"/>
</dbReference>
<dbReference type="HAMAP" id="MF_00148">
    <property type="entry name" value="UDG"/>
    <property type="match status" value="1"/>
</dbReference>
<dbReference type="InterPro" id="IPR002043">
    <property type="entry name" value="UDG_fam1"/>
</dbReference>
<dbReference type="InterPro" id="IPR018085">
    <property type="entry name" value="Ura-DNA_Glyclase_AS"/>
</dbReference>
<dbReference type="InterPro" id="IPR005122">
    <property type="entry name" value="Uracil-DNA_glycosylase-like"/>
</dbReference>
<dbReference type="InterPro" id="IPR036895">
    <property type="entry name" value="Uracil-DNA_glycosylase-like_sf"/>
</dbReference>
<dbReference type="NCBIfam" id="NF003588">
    <property type="entry name" value="PRK05254.1-1"/>
    <property type="match status" value="1"/>
</dbReference>
<dbReference type="NCBIfam" id="NF003589">
    <property type="entry name" value="PRK05254.1-2"/>
    <property type="match status" value="1"/>
</dbReference>
<dbReference type="NCBIfam" id="NF003591">
    <property type="entry name" value="PRK05254.1-4"/>
    <property type="match status" value="1"/>
</dbReference>
<dbReference type="NCBIfam" id="NF003592">
    <property type="entry name" value="PRK05254.1-5"/>
    <property type="match status" value="1"/>
</dbReference>
<dbReference type="NCBIfam" id="TIGR00628">
    <property type="entry name" value="ung"/>
    <property type="match status" value="1"/>
</dbReference>
<dbReference type="PANTHER" id="PTHR11264">
    <property type="entry name" value="URACIL-DNA GLYCOSYLASE"/>
    <property type="match status" value="1"/>
</dbReference>
<dbReference type="PANTHER" id="PTHR11264:SF0">
    <property type="entry name" value="URACIL-DNA GLYCOSYLASE"/>
    <property type="match status" value="1"/>
</dbReference>
<dbReference type="Pfam" id="PF03167">
    <property type="entry name" value="UDG"/>
    <property type="match status" value="1"/>
</dbReference>
<dbReference type="SMART" id="SM00986">
    <property type="entry name" value="UDG"/>
    <property type="match status" value="1"/>
</dbReference>
<dbReference type="SMART" id="SM00987">
    <property type="entry name" value="UreE_C"/>
    <property type="match status" value="1"/>
</dbReference>
<dbReference type="SUPFAM" id="SSF52141">
    <property type="entry name" value="Uracil-DNA glycosylase-like"/>
    <property type="match status" value="1"/>
</dbReference>
<dbReference type="PROSITE" id="PS00130">
    <property type="entry name" value="U_DNA_GLYCOSYLASE"/>
    <property type="match status" value="1"/>
</dbReference>
<accession>Q87XE2</accession>
<evidence type="ECO:0000255" key="1">
    <source>
        <dbReference type="HAMAP-Rule" id="MF_00148"/>
    </source>
</evidence>
<gene>
    <name evidence="1" type="primary">ung</name>
    <name type="ordered locus">PSPTO_4236</name>
</gene>
<protein>
    <recommendedName>
        <fullName evidence="1">Uracil-DNA glycosylase</fullName>
        <shortName evidence="1">UDG</shortName>
        <ecNumber evidence="1">3.2.2.27</ecNumber>
    </recommendedName>
</protein>
<reference key="1">
    <citation type="journal article" date="2003" name="Proc. Natl. Acad. Sci. U.S.A.">
        <title>The complete genome sequence of the Arabidopsis and tomato pathogen Pseudomonas syringae pv. tomato DC3000.</title>
        <authorList>
            <person name="Buell C.R."/>
            <person name="Joardar V."/>
            <person name="Lindeberg M."/>
            <person name="Selengut J."/>
            <person name="Paulsen I.T."/>
            <person name="Gwinn M.L."/>
            <person name="Dodson R.J."/>
            <person name="DeBoy R.T."/>
            <person name="Durkin A.S."/>
            <person name="Kolonay J.F."/>
            <person name="Madupu R."/>
            <person name="Daugherty S.C."/>
            <person name="Brinkac L.M."/>
            <person name="Beanan M.J."/>
            <person name="Haft D.H."/>
            <person name="Nelson W.C."/>
            <person name="Davidsen T.M."/>
            <person name="Zafar N."/>
            <person name="Zhou L."/>
            <person name="Liu J."/>
            <person name="Yuan Q."/>
            <person name="Khouri H.M."/>
            <person name="Fedorova N.B."/>
            <person name="Tran B."/>
            <person name="Russell D."/>
            <person name="Berry K.J."/>
            <person name="Utterback T.R."/>
            <person name="Van Aken S.E."/>
            <person name="Feldblyum T.V."/>
            <person name="D'Ascenzo M."/>
            <person name="Deng W.-L."/>
            <person name="Ramos A.R."/>
            <person name="Alfano J.R."/>
            <person name="Cartinhour S."/>
            <person name="Chatterjee A.K."/>
            <person name="Delaney T.P."/>
            <person name="Lazarowitz S.G."/>
            <person name="Martin G.B."/>
            <person name="Schneider D.J."/>
            <person name="Tang X."/>
            <person name="Bender C.L."/>
            <person name="White O."/>
            <person name="Fraser C.M."/>
            <person name="Collmer A."/>
        </authorList>
    </citation>
    <scope>NUCLEOTIDE SEQUENCE [LARGE SCALE GENOMIC DNA]</scope>
    <source>
        <strain>ATCC BAA-871 / DC3000</strain>
    </source>
</reference>
<feature type="chain" id="PRO_0000176130" description="Uracil-DNA glycosylase">
    <location>
        <begin position="1"/>
        <end position="230"/>
    </location>
</feature>
<feature type="active site" description="Proton acceptor" evidence="1">
    <location>
        <position position="70"/>
    </location>
</feature>
<proteinExistence type="inferred from homology"/>
<comment type="function">
    <text evidence="1">Excises uracil residues from the DNA which can arise as a result of misincorporation of dUMP residues by DNA polymerase or due to deamination of cytosine.</text>
</comment>
<comment type="catalytic activity">
    <reaction evidence="1">
        <text>Hydrolyzes single-stranded DNA or mismatched double-stranded DNA and polynucleotides, releasing free uracil.</text>
        <dbReference type="EC" id="3.2.2.27"/>
    </reaction>
</comment>
<comment type="subcellular location">
    <subcellularLocation>
        <location evidence="1">Cytoplasm</location>
    </subcellularLocation>
</comment>
<comment type="similarity">
    <text evidence="1">Belongs to the uracil-DNA glycosylase (UDG) superfamily. UNG family.</text>
</comment>
<organism>
    <name type="scientific">Pseudomonas syringae pv. tomato (strain ATCC BAA-871 / DC3000)</name>
    <dbReference type="NCBI Taxonomy" id="223283"/>
    <lineage>
        <taxon>Bacteria</taxon>
        <taxon>Pseudomonadati</taxon>
        <taxon>Pseudomonadota</taxon>
        <taxon>Gammaproteobacteria</taxon>
        <taxon>Pseudomonadales</taxon>
        <taxon>Pseudomonadaceae</taxon>
        <taxon>Pseudomonas</taxon>
    </lineage>
</organism>
<sequence length="230" mass="25697">MTSDDRIKLEPSWKEALRDEFEQPYMAQLREFLRQEHAAGKEIYPPGPLIFNALNSTPLDNVKVVILGQDPYHGPNQAHGLCFSVQPGVPTPPSLVNIYKELKRDLNIDIPNHGCLQSWADQGVLMLNTTLTVERANAASHAGKGWQHFTDRIIQVVSEHQPHLVFLLWGAHAQGKQKLVDATKHLVLTSVHPSPLSAYKGFLGNGHFGRANKYLEQNGLAPIDWRLPAL</sequence>
<name>UNG_PSESM</name>